<comment type="function">
    <text evidence="1">Promotes RNA polymerase assembly. Latches the N- and C-terminal regions of the beta' subunit thereby facilitating its interaction with the beta and alpha subunits (By similarity).</text>
</comment>
<comment type="catalytic activity">
    <reaction>
        <text>RNA(n) + a ribonucleoside 5'-triphosphate = RNA(n+1) + diphosphate</text>
        <dbReference type="Rhea" id="RHEA:21248"/>
        <dbReference type="Rhea" id="RHEA-COMP:14527"/>
        <dbReference type="Rhea" id="RHEA-COMP:17342"/>
        <dbReference type="ChEBI" id="CHEBI:33019"/>
        <dbReference type="ChEBI" id="CHEBI:61557"/>
        <dbReference type="ChEBI" id="CHEBI:140395"/>
        <dbReference type="EC" id="2.7.7.6"/>
    </reaction>
</comment>
<comment type="subunit">
    <text evidence="1">The RNAP catalytic core consists of 2 alpha, 1 beta, 1 beta' and 1 omega subunit. When a sigma factor is associated with the core the holoenzyme is formed, which can initiate transcription (By similarity).</text>
</comment>
<comment type="similarity">
    <text evidence="2">Belongs to the RNA polymerase subunit omega family.</text>
</comment>
<proteinExistence type="inferred from homology"/>
<accession>P60332</accession>
<protein>
    <recommendedName>
        <fullName>DNA-directed RNA polymerase subunit omega</fullName>
        <shortName>RNAP omega subunit</shortName>
        <ecNumber>2.7.7.6</ecNumber>
    </recommendedName>
    <alternativeName>
        <fullName>RNA polymerase omega subunit</fullName>
    </alternativeName>
    <alternativeName>
        <fullName>Transcriptase subunit omega</fullName>
    </alternativeName>
</protein>
<dbReference type="EC" id="2.7.7.6"/>
<dbReference type="EMBL" id="AE015927">
    <property type="status" value="NOT_ANNOTATED_CDS"/>
    <property type="molecule type" value="Genomic_DNA"/>
</dbReference>
<dbReference type="RefSeq" id="WP_023438096.1">
    <property type="nucleotide sequence ID" value="NC_004557.1"/>
</dbReference>
<dbReference type="SMR" id="P60332"/>
<dbReference type="GeneID" id="24254434"/>
<dbReference type="OrthoDB" id="9815459at2"/>
<dbReference type="Proteomes" id="UP000001412">
    <property type="component" value="Chromosome"/>
</dbReference>
<dbReference type="GO" id="GO:0000428">
    <property type="term" value="C:DNA-directed RNA polymerase complex"/>
    <property type="evidence" value="ECO:0007669"/>
    <property type="project" value="UniProtKB-KW"/>
</dbReference>
<dbReference type="GO" id="GO:0003677">
    <property type="term" value="F:DNA binding"/>
    <property type="evidence" value="ECO:0007669"/>
    <property type="project" value="UniProtKB-UniRule"/>
</dbReference>
<dbReference type="GO" id="GO:0003899">
    <property type="term" value="F:DNA-directed RNA polymerase activity"/>
    <property type="evidence" value="ECO:0007669"/>
    <property type="project" value="UniProtKB-UniRule"/>
</dbReference>
<dbReference type="GO" id="GO:0006351">
    <property type="term" value="P:DNA-templated transcription"/>
    <property type="evidence" value="ECO:0007669"/>
    <property type="project" value="UniProtKB-UniRule"/>
</dbReference>
<dbReference type="Gene3D" id="3.90.940.10">
    <property type="match status" value="1"/>
</dbReference>
<dbReference type="HAMAP" id="MF_00366">
    <property type="entry name" value="RNApol_bact_RpoZ"/>
    <property type="match status" value="1"/>
</dbReference>
<dbReference type="InterPro" id="IPR003716">
    <property type="entry name" value="DNA-dir_RNA_pol_omega"/>
</dbReference>
<dbReference type="InterPro" id="IPR006110">
    <property type="entry name" value="Pol_omega/Rpo6/RPB6"/>
</dbReference>
<dbReference type="InterPro" id="IPR036161">
    <property type="entry name" value="RPB6/omega-like_sf"/>
</dbReference>
<dbReference type="NCBIfam" id="TIGR00690">
    <property type="entry name" value="rpoZ"/>
    <property type="match status" value="1"/>
</dbReference>
<dbReference type="PANTHER" id="PTHR34476">
    <property type="entry name" value="DNA-DIRECTED RNA POLYMERASE SUBUNIT OMEGA"/>
    <property type="match status" value="1"/>
</dbReference>
<dbReference type="PANTHER" id="PTHR34476:SF1">
    <property type="entry name" value="DNA-DIRECTED RNA POLYMERASE SUBUNIT OMEGA"/>
    <property type="match status" value="1"/>
</dbReference>
<dbReference type="Pfam" id="PF01192">
    <property type="entry name" value="RNA_pol_Rpb6"/>
    <property type="match status" value="1"/>
</dbReference>
<dbReference type="SMART" id="SM01409">
    <property type="entry name" value="RNA_pol_Rpb6"/>
    <property type="match status" value="1"/>
</dbReference>
<dbReference type="SUPFAM" id="SSF63562">
    <property type="entry name" value="RPB6/omega subunit-like"/>
    <property type="match status" value="1"/>
</dbReference>
<evidence type="ECO:0000250" key="1"/>
<evidence type="ECO:0000305" key="2"/>
<organism>
    <name type="scientific">Clostridium tetani (strain Massachusetts / E88)</name>
    <dbReference type="NCBI Taxonomy" id="212717"/>
    <lineage>
        <taxon>Bacteria</taxon>
        <taxon>Bacillati</taxon>
        <taxon>Bacillota</taxon>
        <taxon>Clostridia</taxon>
        <taxon>Eubacteriales</taxon>
        <taxon>Clostridiaceae</taxon>
        <taxon>Clostridium</taxon>
    </lineage>
</organism>
<gene>
    <name type="primary">rpoZ</name>
    <name type="ordered locus">CTC_01216.1</name>
</gene>
<feature type="chain" id="PRO_0000128929" description="DNA-directed RNA polymerase subunit omega">
    <location>
        <begin position="1"/>
        <end position="72"/>
    </location>
</feature>
<sequence length="72" mass="8002">MNNSMINPAITDLLKKVDNRYSLVVVTSKRARQLVDGDEALLESDIVKPVSLAIEEVNDGLISYETIREGIK</sequence>
<reference key="1">
    <citation type="journal article" date="2003" name="Proc. Natl. Acad. Sci. U.S.A.">
        <title>The genome sequence of Clostridium tetani, the causative agent of tetanus disease.</title>
        <authorList>
            <person name="Brueggemann H."/>
            <person name="Baeumer S."/>
            <person name="Fricke W.F."/>
            <person name="Wiezer A."/>
            <person name="Liesegang H."/>
            <person name="Decker I."/>
            <person name="Herzberg C."/>
            <person name="Martinez-Arias R."/>
            <person name="Merkl R."/>
            <person name="Henne A."/>
            <person name="Gottschalk G."/>
        </authorList>
    </citation>
    <scope>NUCLEOTIDE SEQUENCE [LARGE SCALE GENOMIC DNA]</scope>
    <source>
        <strain>Massachusetts / E88</strain>
    </source>
</reference>
<keyword id="KW-0240">DNA-directed RNA polymerase</keyword>
<keyword id="KW-0548">Nucleotidyltransferase</keyword>
<keyword id="KW-1185">Reference proteome</keyword>
<keyword id="KW-0804">Transcription</keyword>
<keyword id="KW-0808">Transferase</keyword>
<name>RPOZ_CLOTE</name>